<protein>
    <recommendedName>
        <fullName evidence="1">Ribosome-recycling factor</fullName>
        <shortName evidence="1">RRF</shortName>
    </recommendedName>
    <alternativeName>
        <fullName evidence="1">Ribosome-releasing factor</fullName>
    </alternativeName>
</protein>
<proteinExistence type="inferred from homology"/>
<accession>Q17Z48</accession>
<name>RRF_HELAH</name>
<reference key="1">
    <citation type="journal article" date="2006" name="PLoS Genet.">
        <title>Who ate whom? Adaptive Helicobacter genomic changes that accompanied a host jump from early humans to large felines.</title>
        <authorList>
            <person name="Eppinger M."/>
            <person name="Baar C."/>
            <person name="Linz B."/>
            <person name="Raddatz G."/>
            <person name="Lanz C."/>
            <person name="Keller H."/>
            <person name="Morelli G."/>
            <person name="Gressmann H."/>
            <person name="Achtman M."/>
            <person name="Schuster S.C."/>
        </authorList>
    </citation>
    <scope>NUCLEOTIDE SEQUENCE [LARGE SCALE GENOMIC DNA]</scope>
    <source>
        <strain>Sheeba</strain>
    </source>
</reference>
<sequence length="185" mass="20943">MLQTIYNETKDLMQKSIQALNREFSTLRSAKVSVNILDHIKVDYYGTPTALNQVGSVMSLDATTLQISPWEKNLLKEIERAIQEANIGVNPNNDGETIKLFFPPMTTEQRKLIAKDAKAMGEKAKVAVRNIRQDANNKVKKLEKDKEISEDESKKAQEQVQKITDEAIKKIDESVKNKEDAILKV</sequence>
<organism>
    <name type="scientific">Helicobacter acinonychis (strain Sheeba)</name>
    <dbReference type="NCBI Taxonomy" id="382638"/>
    <lineage>
        <taxon>Bacteria</taxon>
        <taxon>Pseudomonadati</taxon>
        <taxon>Campylobacterota</taxon>
        <taxon>Epsilonproteobacteria</taxon>
        <taxon>Campylobacterales</taxon>
        <taxon>Helicobacteraceae</taxon>
        <taxon>Helicobacter</taxon>
    </lineage>
</organism>
<dbReference type="EMBL" id="AM260522">
    <property type="protein sequence ID" value="CAJ99078.1"/>
    <property type="molecule type" value="Genomic_DNA"/>
</dbReference>
<dbReference type="RefSeq" id="WP_011577193.1">
    <property type="nucleotide sequence ID" value="NC_008229.1"/>
</dbReference>
<dbReference type="SMR" id="Q17Z48"/>
<dbReference type="STRING" id="382638.Hac_0229"/>
<dbReference type="GeneID" id="31757751"/>
<dbReference type="KEGG" id="hac:Hac_0229"/>
<dbReference type="eggNOG" id="COG0233">
    <property type="taxonomic scope" value="Bacteria"/>
</dbReference>
<dbReference type="HOGENOM" id="CLU_073981_2_0_7"/>
<dbReference type="OrthoDB" id="9804006at2"/>
<dbReference type="BioCyc" id="HACI382638:HAC_RS01025-MONOMER"/>
<dbReference type="Proteomes" id="UP000000775">
    <property type="component" value="Chromosome"/>
</dbReference>
<dbReference type="GO" id="GO:0005829">
    <property type="term" value="C:cytosol"/>
    <property type="evidence" value="ECO:0007669"/>
    <property type="project" value="GOC"/>
</dbReference>
<dbReference type="GO" id="GO:0043023">
    <property type="term" value="F:ribosomal large subunit binding"/>
    <property type="evidence" value="ECO:0007669"/>
    <property type="project" value="TreeGrafter"/>
</dbReference>
<dbReference type="GO" id="GO:0002184">
    <property type="term" value="P:cytoplasmic translational termination"/>
    <property type="evidence" value="ECO:0007669"/>
    <property type="project" value="TreeGrafter"/>
</dbReference>
<dbReference type="CDD" id="cd00520">
    <property type="entry name" value="RRF"/>
    <property type="match status" value="1"/>
</dbReference>
<dbReference type="FunFam" id="1.10.132.20:FF:000001">
    <property type="entry name" value="Ribosome-recycling factor"/>
    <property type="match status" value="1"/>
</dbReference>
<dbReference type="FunFam" id="3.30.1360.40:FF:000001">
    <property type="entry name" value="Ribosome-recycling factor"/>
    <property type="match status" value="1"/>
</dbReference>
<dbReference type="Gene3D" id="3.30.1360.40">
    <property type="match status" value="1"/>
</dbReference>
<dbReference type="Gene3D" id="1.10.132.20">
    <property type="entry name" value="Ribosome-recycling factor"/>
    <property type="match status" value="1"/>
</dbReference>
<dbReference type="HAMAP" id="MF_00040">
    <property type="entry name" value="RRF"/>
    <property type="match status" value="1"/>
</dbReference>
<dbReference type="InterPro" id="IPR002661">
    <property type="entry name" value="Ribosome_recyc_fac"/>
</dbReference>
<dbReference type="InterPro" id="IPR023584">
    <property type="entry name" value="Ribosome_recyc_fac_dom"/>
</dbReference>
<dbReference type="InterPro" id="IPR036191">
    <property type="entry name" value="RRF_sf"/>
</dbReference>
<dbReference type="NCBIfam" id="TIGR00496">
    <property type="entry name" value="frr"/>
    <property type="match status" value="1"/>
</dbReference>
<dbReference type="PANTHER" id="PTHR20982:SF3">
    <property type="entry name" value="MITOCHONDRIAL RIBOSOME RECYCLING FACTOR PSEUDO 1"/>
    <property type="match status" value="1"/>
</dbReference>
<dbReference type="PANTHER" id="PTHR20982">
    <property type="entry name" value="RIBOSOME RECYCLING FACTOR"/>
    <property type="match status" value="1"/>
</dbReference>
<dbReference type="Pfam" id="PF01765">
    <property type="entry name" value="RRF"/>
    <property type="match status" value="1"/>
</dbReference>
<dbReference type="SUPFAM" id="SSF55194">
    <property type="entry name" value="Ribosome recycling factor, RRF"/>
    <property type="match status" value="1"/>
</dbReference>
<evidence type="ECO:0000255" key="1">
    <source>
        <dbReference type="HAMAP-Rule" id="MF_00040"/>
    </source>
</evidence>
<evidence type="ECO:0000256" key="2">
    <source>
        <dbReference type="SAM" id="MobiDB-lite"/>
    </source>
</evidence>
<gene>
    <name evidence="1" type="primary">frr</name>
    <name type="ordered locus">Hac_0229</name>
</gene>
<comment type="function">
    <text evidence="1">Responsible for the release of ribosomes from messenger RNA at the termination of protein biosynthesis. May increase the efficiency of translation by recycling ribosomes from one round of translation to another.</text>
</comment>
<comment type="subcellular location">
    <subcellularLocation>
        <location evidence="1">Cytoplasm</location>
    </subcellularLocation>
</comment>
<comment type="similarity">
    <text evidence="1">Belongs to the RRF family.</text>
</comment>
<keyword id="KW-0963">Cytoplasm</keyword>
<keyword id="KW-0648">Protein biosynthesis</keyword>
<feature type="chain" id="PRO_1000003177" description="Ribosome-recycling factor">
    <location>
        <begin position="1"/>
        <end position="185"/>
    </location>
</feature>
<feature type="region of interest" description="Disordered" evidence="2">
    <location>
        <begin position="138"/>
        <end position="159"/>
    </location>
</feature>